<evidence type="ECO:0000255" key="1">
    <source>
        <dbReference type="HAMAP-Rule" id="MF_00025"/>
    </source>
</evidence>
<gene>
    <name evidence="1" type="primary">rpo5</name>
    <name evidence="1" type="synonym">rpoH</name>
    <name type="ordered locus">MMP1360</name>
</gene>
<proteinExistence type="inferred from homology"/>
<feature type="chain" id="PRO_0000146095" description="DNA-directed RNA polymerase subunit Rpo5">
    <location>
        <begin position="1"/>
        <end position="78"/>
    </location>
</feature>
<reference key="1">
    <citation type="journal article" date="2004" name="J. Bacteriol.">
        <title>Complete genome sequence of the genetically tractable hydrogenotrophic methanogen Methanococcus maripaludis.</title>
        <authorList>
            <person name="Hendrickson E.L."/>
            <person name="Kaul R."/>
            <person name="Zhou Y."/>
            <person name="Bovee D."/>
            <person name="Chapman P."/>
            <person name="Chung J."/>
            <person name="Conway de Macario E."/>
            <person name="Dodsworth J.A."/>
            <person name="Gillett W."/>
            <person name="Graham D.E."/>
            <person name="Hackett M."/>
            <person name="Haydock A.K."/>
            <person name="Kang A."/>
            <person name="Land M.L."/>
            <person name="Levy R."/>
            <person name="Lie T.J."/>
            <person name="Major T.A."/>
            <person name="Moore B.C."/>
            <person name="Porat I."/>
            <person name="Palmeiri A."/>
            <person name="Rouse G."/>
            <person name="Saenphimmachak C."/>
            <person name="Soell D."/>
            <person name="Van Dien S."/>
            <person name="Wang T."/>
            <person name="Whitman W.B."/>
            <person name="Xia Q."/>
            <person name="Zhang Y."/>
            <person name="Larimer F.W."/>
            <person name="Olson M.V."/>
            <person name="Leigh J.A."/>
        </authorList>
    </citation>
    <scope>NUCLEOTIDE SEQUENCE [LARGE SCALE GENOMIC DNA]</scope>
    <source>
        <strain>DSM 14266 / JCM 13030 / NBRC 101832 / S2 / LL</strain>
    </source>
</reference>
<protein>
    <recommendedName>
        <fullName evidence="1">DNA-directed RNA polymerase subunit Rpo5</fullName>
        <ecNumber evidence="1">2.7.7.6</ecNumber>
    </recommendedName>
    <alternativeName>
        <fullName evidence="1">DNA-directed RNA polymerase subunit H</fullName>
    </alternativeName>
</protein>
<dbReference type="EC" id="2.7.7.6" evidence="1"/>
<dbReference type="EMBL" id="BX950229">
    <property type="protein sequence ID" value="CAF30916.1"/>
    <property type="molecule type" value="Genomic_DNA"/>
</dbReference>
<dbReference type="RefSeq" id="WP_011171304.1">
    <property type="nucleotide sequence ID" value="NC_005791.1"/>
</dbReference>
<dbReference type="SMR" id="P61519"/>
<dbReference type="STRING" id="267377.MMP1360"/>
<dbReference type="EnsemblBacteria" id="CAF30916">
    <property type="protein sequence ID" value="CAF30916"/>
    <property type="gene ID" value="MMP1360"/>
</dbReference>
<dbReference type="KEGG" id="mmp:MMP1360"/>
<dbReference type="PATRIC" id="fig|267377.15.peg.1395"/>
<dbReference type="eggNOG" id="arCOG04258">
    <property type="taxonomic scope" value="Archaea"/>
</dbReference>
<dbReference type="HOGENOM" id="CLU_058320_4_0_2"/>
<dbReference type="OrthoDB" id="30537at2157"/>
<dbReference type="Proteomes" id="UP000000590">
    <property type="component" value="Chromosome"/>
</dbReference>
<dbReference type="GO" id="GO:0005737">
    <property type="term" value="C:cytoplasm"/>
    <property type="evidence" value="ECO:0007669"/>
    <property type="project" value="UniProtKB-SubCell"/>
</dbReference>
<dbReference type="GO" id="GO:0000428">
    <property type="term" value="C:DNA-directed RNA polymerase complex"/>
    <property type="evidence" value="ECO:0007669"/>
    <property type="project" value="UniProtKB-KW"/>
</dbReference>
<dbReference type="GO" id="GO:0003677">
    <property type="term" value="F:DNA binding"/>
    <property type="evidence" value="ECO:0007669"/>
    <property type="project" value="InterPro"/>
</dbReference>
<dbReference type="GO" id="GO:0003899">
    <property type="term" value="F:DNA-directed RNA polymerase activity"/>
    <property type="evidence" value="ECO:0007669"/>
    <property type="project" value="UniProtKB-UniRule"/>
</dbReference>
<dbReference type="GO" id="GO:0006366">
    <property type="term" value="P:transcription by RNA polymerase II"/>
    <property type="evidence" value="ECO:0007669"/>
    <property type="project" value="TreeGrafter"/>
</dbReference>
<dbReference type="GO" id="GO:0006362">
    <property type="term" value="P:transcription elongation by RNA polymerase I"/>
    <property type="evidence" value="ECO:0007669"/>
    <property type="project" value="TreeGrafter"/>
</dbReference>
<dbReference type="GO" id="GO:0042797">
    <property type="term" value="P:tRNA transcription by RNA polymerase III"/>
    <property type="evidence" value="ECO:0007669"/>
    <property type="project" value="TreeGrafter"/>
</dbReference>
<dbReference type="Gene3D" id="3.90.940.20">
    <property type="entry name" value="RPB5-like RNA polymerase subunit"/>
    <property type="match status" value="1"/>
</dbReference>
<dbReference type="HAMAP" id="MF_00025">
    <property type="entry name" value="RNApol_Rpo5_RPB5"/>
    <property type="match status" value="1"/>
</dbReference>
<dbReference type="InterPro" id="IPR014381">
    <property type="entry name" value="Arch_Rpo5/euc_Rpb5"/>
</dbReference>
<dbReference type="InterPro" id="IPR000783">
    <property type="entry name" value="RNA_pol_subH/Rpb5_C"/>
</dbReference>
<dbReference type="InterPro" id="IPR020608">
    <property type="entry name" value="RNA_pol_subH/Rpb5_CS"/>
</dbReference>
<dbReference type="InterPro" id="IPR035913">
    <property type="entry name" value="RPB5-like_sf"/>
</dbReference>
<dbReference type="NCBIfam" id="NF007129">
    <property type="entry name" value="PRK09570.1"/>
    <property type="match status" value="1"/>
</dbReference>
<dbReference type="PANTHER" id="PTHR10535">
    <property type="entry name" value="DNA-DIRECTED RNA POLYMERASES I, II, AND III SUBUNIT RPABC1"/>
    <property type="match status" value="1"/>
</dbReference>
<dbReference type="PANTHER" id="PTHR10535:SF0">
    <property type="entry name" value="DNA-DIRECTED RNA POLYMERASES I, II, AND III SUBUNIT RPABC1"/>
    <property type="match status" value="1"/>
</dbReference>
<dbReference type="Pfam" id="PF01191">
    <property type="entry name" value="RNA_pol_Rpb5_C"/>
    <property type="match status" value="1"/>
</dbReference>
<dbReference type="SUPFAM" id="SSF55287">
    <property type="entry name" value="RPB5-like RNA polymerase subunit"/>
    <property type="match status" value="1"/>
</dbReference>
<dbReference type="PROSITE" id="PS01110">
    <property type="entry name" value="RNA_POL_H_23KD"/>
    <property type="match status" value="1"/>
</dbReference>
<sequence>MKISSHEMVPTHEIIPREEIPLLLEKYSIKMQQFPKLLDTDPLVLEIGATPGDVVKITRMSPTAGESTYYRLVIATSL</sequence>
<comment type="function">
    <text evidence="1">DNA-dependent RNA polymerase (RNAP) catalyzes the transcription of DNA into RNA using the four ribonucleoside triphosphates as substrates.</text>
</comment>
<comment type="catalytic activity">
    <reaction evidence="1">
        <text>RNA(n) + a ribonucleoside 5'-triphosphate = RNA(n+1) + diphosphate</text>
        <dbReference type="Rhea" id="RHEA:21248"/>
        <dbReference type="Rhea" id="RHEA-COMP:14527"/>
        <dbReference type="Rhea" id="RHEA-COMP:17342"/>
        <dbReference type="ChEBI" id="CHEBI:33019"/>
        <dbReference type="ChEBI" id="CHEBI:61557"/>
        <dbReference type="ChEBI" id="CHEBI:140395"/>
        <dbReference type="EC" id="2.7.7.6"/>
    </reaction>
</comment>
<comment type="subunit">
    <text evidence="1">Part of the RNA polymerase complex.</text>
</comment>
<comment type="subcellular location">
    <subcellularLocation>
        <location evidence="1">Cytoplasm</location>
    </subcellularLocation>
</comment>
<comment type="similarity">
    <text evidence="1">Belongs to the archaeal Rpo5/eukaryotic RPB5 RNA polymerase subunit family.</text>
</comment>
<keyword id="KW-0963">Cytoplasm</keyword>
<keyword id="KW-0240">DNA-directed RNA polymerase</keyword>
<keyword id="KW-0548">Nucleotidyltransferase</keyword>
<keyword id="KW-1185">Reference proteome</keyword>
<keyword id="KW-0804">Transcription</keyword>
<keyword id="KW-0808">Transferase</keyword>
<accession>P61519</accession>
<organism>
    <name type="scientific">Methanococcus maripaludis (strain DSM 14266 / JCM 13030 / NBRC 101832 / S2 / LL)</name>
    <dbReference type="NCBI Taxonomy" id="267377"/>
    <lineage>
        <taxon>Archaea</taxon>
        <taxon>Methanobacteriati</taxon>
        <taxon>Methanobacteriota</taxon>
        <taxon>Methanomada group</taxon>
        <taxon>Methanococci</taxon>
        <taxon>Methanococcales</taxon>
        <taxon>Methanococcaceae</taxon>
        <taxon>Methanococcus</taxon>
    </lineage>
</organism>
<name>RPO5_METMP</name>